<keyword id="KW-0028">Amino-acid biosynthesis</keyword>
<keyword id="KW-0963">Cytoplasm</keyword>
<keyword id="KW-0220">Diaminopimelate biosynthesis</keyword>
<keyword id="KW-0457">Lysine biosynthesis</keyword>
<keyword id="KW-0520">NAD</keyword>
<keyword id="KW-0521">NADP</keyword>
<keyword id="KW-0560">Oxidoreductase</keyword>
<keyword id="KW-1185">Reference proteome</keyword>
<reference key="1">
    <citation type="journal article" date="2009" name="BMC Microbiol.">
        <title>The genome sequence of Geobacter metallireducens: features of metabolism, physiology and regulation common and dissimilar to Geobacter sulfurreducens.</title>
        <authorList>
            <person name="Aklujkar M."/>
            <person name="Krushkal J."/>
            <person name="DiBartolo G."/>
            <person name="Lapidus A."/>
            <person name="Land M.L."/>
            <person name="Lovley D.R."/>
        </authorList>
    </citation>
    <scope>NUCLEOTIDE SEQUENCE [LARGE SCALE GENOMIC DNA]</scope>
    <source>
        <strain>ATCC 53774 / DSM 7210 / GS-15</strain>
    </source>
</reference>
<protein>
    <recommendedName>
        <fullName evidence="1">4-hydroxy-tetrahydrodipicolinate reductase</fullName>
        <shortName evidence="1">HTPA reductase</shortName>
        <ecNumber evidence="1">1.17.1.8</ecNumber>
    </recommendedName>
</protein>
<organism>
    <name type="scientific">Geobacter metallireducens (strain ATCC 53774 / DSM 7210 / GS-15)</name>
    <dbReference type="NCBI Taxonomy" id="269799"/>
    <lineage>
        <taxon>Bacteria</taxon>
        <taxon>Pseudomonadati</taxon>
        <taxon>Thermodesulfobacteriota</taxon>
        <taxon>Desulfuromonadia</taxon>
        <taxon>Geobacterales</taxon>
        <taxon>Geobacteraceae</taxon>
        <taxon>Geobacter</taxon>
    </lineage>
</organism>
<feature type="chain" id="PRO_0000228352" description="4-hydroxy-tetrahydrodipicolinate reductase">
    <location>
        <begin position="1"/>
        <end position="266"/>
    </location>
</feature>
<feature type="active site" description="Proton donor/acceptor" evidence="1">
    <location>
        <position position="154"/>
    </location>
</feature>
<feature type="active site" description="Proton donor" evidence="1">
    <location>
        <position position="158"/>
    </location>
</feature>
<feature type="binding site" evidence="1">
    <location>
        <begin position="8"/>
        <end position="13"/>
    </location>
    <ligand>
        <name>NAD(+)</name>
        <dbReference type="ChEBI" id="CHEBI:57540"/>
    </ligand>
</feature>
<feature type="binding site" evidence="1">
    <location>
        <position position="33"/>
    </location>
    <ligand>
        <name>NAD(+)</name>
        <dbReference type="ChEBI" id="CHEBI:57540"/>
    </ligand>
</feature>
<feature type="binding site" evidence="1">
    <location>
        <position position="34"/>
    </location>
    <ligand>
        <name>NADP(+)</name>
        <dbReference type="ChEBI" id="CHEBI:58349"/>
    </ligand>
</feature>
<feature type="binding site" evidence="1">
    <location>
        <begin position="97"/>
        <end position="99"/>
    </location>
    <ligand>
        <name>NAD(+)</name>
        <dbReference type="ChEBI" id="CHEBI:57540"/>
    </ligand>
</feature>
<feature type="binding site" evidence="1">
    <location>
        <begin position="121"/>
        <end position="124"/>
    </location>
    <ligand>
        <name>NAD(+)</name>
        <dbReference type="ChEBI" id="CHEBI:57540"/>
    </ligand>
</feature>
<feature type="binding site" evidence="1">
    <location>
        <position position="155"/>
    </location>
    <ligand>
        <name>(S)-2,3,4,5-tetrahydrodipicolinate</name>
        <dbReference type="ChEBI" id="CHEBI:16845"/>
    </ligand>
</feature>
<feature type="binding site" evidence="1">
    <location>
        <begin position="164"/>
        <end position="165"/>
    </location>
    <ligand>
        <name>(S)-2,3,4,5-tetrahydrodipicolinate</name>
        <dbReference type="ChEBI" id="CHEBI:16845"/>
    </ligand>
</feature>
<proteinExistence type="inferred from homology"/>
<evidence type="ECO:0000255" key="1">
    <source>
        <dbReference type="HAMAP-Rule" id="MF_00102"/>
    </source>
</evidence>
<evidence type="ECO:0000305" key="2"/>
<gene>
    <name evidence="1" type="primary">dapB</name>
    <name type="ordered locus">Gmet_0212</name>
</gene>
<name>DAPB_GEOMG</name>
<sequence>MVKIAVCGAAGRMGQRIIVAAKEAGCTVSGALERPGHELVGQDAGLIAGCGALGVAISDDLNAVVDGCDVLIDFTTPKVSLKNLEACALKKKAIVIGSTGFTPEERALAAELAKDIPAVLAPNMSVGVNVCFKILKDVAKTLGDDFDVEIVELHHNKKKDAPSGTAVRMGEVVAEALGRDYNKVANYHREGICGERTKEEIGMQTVRGGDIVGEHTVYFIGMGERIEISHRAMTRDMFSRGSVRAAQWVVGKAPGLYDMQDVLGLR</sequence>
<accession>Q39Z66</accession>
<comment type="function">
    <text evidence="1">Catalyzes the conversion of 4-hydroxy-tetrahydrodipicolinate (HTPA) to tetrahydrodipicolinate.</text>
</comment>
<comment type="catalytic activity">
    <reaction evidence="1">
        <text>(S)-2,3,4,5-tetrahydrodipicolinate + NAD(+) + H2O = (2S,4S)-4-hydroxy-2,3,4,5-tetrahydrodipicolinate + NADH + H(+)</text>
        <dbReference type="Rhea" id="RHEA:35323"/>
        <dbReference type="ChEBI" id="CHEBI:15377"/>
        <dbReference type="ChEBI" id="CHEBI:15378"/>
        <dbReference type="ChEBI" id="CHEBI:16845"/>
        <dbReference type="ChEBI" id="CHEBI:57540"/>
        <dbReference type="ChEBI" id="CHEBI:57945"/>
        <dbReference type="ChEBI" id="CHEBI:67139"/>
        <dbReference type="EC" id="1.17.1.8"/>
    </reaction>
</comment>
<comment type="catalytic activity">
    <reaction evidence="1">
        <text>(S)-2,3,4,5-tetrahydrodipicolinate + NADP(+) + H2O = (2S,4S)-4-hydroxy-2,3,4,5-tetrahydrodipicolinate + NADPH + H(+)</text>
        <dbReference type="Rhea" id="RHEA:35331"/>
        <dbReference type="ChEBI" id="CHEBI:15377"/>
        <dbReference type="ChEBI" id="CHEBI:15378"/>
        <dbReference type="ChEBI" id="CHEBI:16845"/>
        <dbReference type="ChEBI" id="CHEBI:57783"/>
        <dbReference type="ChEBI" id="CHEBI:58349"/>
        <dbReference type="ChEBI" id="CHEBI:67139"/>
        <dbReference type="EC" id="1.17.1.8"/>
    </reaction>
</comment>
<comment type="pathway">
    <text evidence="1">Amino-acid biosynthesis; L-lysine biosynthesis via DAP pathway; (S)-tetrahydrodipicolinate from L-aspartate: step 4/4.</text>
</comment>
<comment type="subcellular location">
    <subcellularLocation>
        <location evidence="1">Cytoplasm</location>
    </subcellularLocation>
</comment>
<comment type="similarity">
    <text evidence="1">Belongs to the DapB family.</text>
</comment>
<comment type="caution">
    <text evidence="2">Was originally thought to be a dihydrodipicolinate reductase (DHDPR), catalyzing the conversion of dihydrodipicolinate to tetrahydrodipicolinate. However, it was shown in E.coli that the substrate of the enzymatic reaction is not dihydrodipicolinate (DHDP) but in fact (2S,4S)-4-hydroxy-2,3,4,5-tetrahydrodipicolinic acid (HTPA), the product released by the DapA-catalyzed reaction.</text>
</comment>
<dbReference type="EC" id="1.17.1.8" evidence="1"/>
<dbReference type="EMBL" id="CP000148">
    <property type="protein sequence ID" value="ABB30458.1"/>
    <property type="molecule type" value="Genomic_DNA"/>
</dbReference>
<dbReference type="RefSeq" id="WP_004512801.1">
    <property type="nucleotide sequence ID" value="NC_007517.1"/>
</dbReference>
<dbReference type="SMR" id="Q39Z66"/>
<dbReference type="STRING" id="269799.Gmet_0212"/>
<dbReference type="KEGG" id="gme:Gmet_0212"/>
<dbReference type="eggNOG" id="COG0289">
    <property type="taxonomic scope" value="Bacteria"/>
</dbReference>
<dbReference type="HOGENOM" id="CLU_047479_2_1_7"/>
<dbReference type="UniPathway" id="UPA00034">
    <property type="reaction ID" value="UER00018"/>
</dbReference>
<dbReference type="Proteomes" id="UP000007073">
    <property type="component" value="Chromosome"/>
</dbReference>
<dbReference type="GO" id="GO:0005829">
    <property type="term" value="C:cytosol"/>
    <property type="evidence" value="ECO:0007669"/>
    <property type="project" value="TreeGrafter"/>
</dbReference>
<dbReference type="GO" id="GO:0008839">
    <property type="term" value="F:4-hydroxy-tetrahydrodipicolinate reductase"/>
    <property type="evidence" value="ECO:0007669"/>
    <property type="project" value="UniProtKB-EC"/>
</dbReference>
<dbReference type="GO" id="GO:0051287">
    <property type="term" value="F:NAD binding"/>
    <property type="evidence" value="ECO:0007669"/>
    <property type="project" value="UniProtKB-UniRule"/>
</dbReference>
<dbReference type="GO" id="GO:0050661">
    <property type="term" value="F:NADP binding"/>
    <property type="evidence" value="ECO:0007669"/>
    <property type="project" value="UniProtKB-UniRule"/>
</dbReference>
<dbReference type="GO" id="GO:0016726">
    <property type="term" value="F:oxidoreductase activity, acting on CH or CH2 groups, NAD or NADP as acceptor"/>
    <property type="evidence" value="ECO:0007669"/>
    <property type="project" value="UniProtKB-UniRule"/>
</dbReference>
<dbReference type="GO" id="GO:0019877">
    <property type="term" value="P:diaminopimelate biosynthetic process"/>
    <property type="evidence" value="ECO:0007669"/>
    <property type="project" value="UniProtKB-UniRule"/>
</dbReference>
<dbReference type="GO" id="GO:0009089">
    <property type="term" value="P:lysine biosynthetic process via diaminopimelate"/>
    <property type="evidence" value="ECO:0007669"/>
    <property type="project" value="UniProtKB-UniRule"/>
</dbReference>
<dbReference type="CDD" id="cd02274">
    <property type="entry name" value="DHDPR_N"/>
    <property type="match status" value="1"/>
</dbReference>
<dbReference type="FunFam" id="3.30.360.10:FF:000004">
    <property type="entry name" value="4-hydroxy-tetrahydrodipicolinate reductase"/>
    <property type="match status" value="1"/>
</dbReference>
<dbReference type="FunFam" id="3.40.50.720:FF:000048">
    <property type="entry name" value="4-hydroxy-tetrahydrodipicolinate reductase"/>
    <property type="match status" value="1"/>
</dbReference>
<dbReference type="Gene3D" id="3.30.360.10">
    <property type="entry name" value="Dihydrodipicolinate Reductase, domain 2"/>
    <property type="match status" value="1"/>
</dbReference>
<dbReference type="Gene3D" id="3.40.50.720">
    <property type="entry name" value="NAD(P)-binding Rossmann-like Domain"/>
    <property type="match status" value="1"/>
</dbReference>
<dbReference type="HAMAP" id="MF_00102">
    <property type="entry name" value="DapB"/>
    <property type="match status" value="1"/>
</dbReference>
<dbReference type="InterPro" id="IPR022663">
    <property type="entry name" value="DapB_C"/>
</dbReference>
<dbReference type="InterPro" id="IPR000846">
    <property type="entry name" value="DapB_N"/>
</dbReference>
<dbReference type="InterPro" id="IPR022664">
    <property type="entry name" value="DapB_N_CS"/>
</dbReference>
<dbReference type="InterPro" id="IPR023940">
    <property type="entry name" value="DHDPR_bac"/>
</dbReference>
<dbReference type="InterPro" id="IPR036291">
    <property type="entry name" value="NAD(P)-bd_dom_sf"/>
</dbReference>
<dbReference type="NCBIfam" id="TIGR00036">
    <property type="entry name" value="dapB"/>
    <property type="match status" value="1"/>
</dbReference>
<dbReference type="PANTHER" id="PTHR20836:SF0">
    <property type="entry name" value="4-HYDROXY-TETRAHYDRODIPICOLINATE REDUCTASE 1, CHLOROPLASTIC-RELATED"/>
    <property type="match status" value="1"/>
</dbReference>
<dbReference type="PANTHER" id="PTHR20836">
    <property type="entry name" value="DIHYDRODIPICOLINATE REDUCTASE"/>
    <property type="match status" value="1"/>
</dbReference>
<dbReference type="Pfam" id="PF05173">
    <property type="entry name" value="DapB_C"/>
    <property type="match status" value="1"/>
</dbReference>
<dbReference type="Pfam" id="PF01113">
    <property type="entry name" value="DapB_N"/>
    <property type="match status" value="1"/>
</dbReference>
<dbReference type="PIRSF" id="PIRSF000161">
    <property type="entry name" value="DHPR"/>
    <property type="match status" value="1"/>
</dbReference>
<dbReference type="SUPFAM" id="SSF55347">
    <property type="entry name" value="Glyceraldehyde-3-phosphate dehydrogenase-like, C-terminal domain"/>
    <property type="match status" value="1"/>
</dbReference>
<dbReference type="SUPFAM" id="SSF51735">
    <property type="entry name" value="NAD(P)-binding Rossmann-fold domains"/>
    <property type="match status" value="1"/>
</dbReference>
<dbReference type="PROSITE" id="PS01298">
    <property type="entry name" value="DAPB"/>
    <property type="match status" value="1"/>
</dbReference>